<comment type="function">
    <text evidence="1">Ring cyclization and eight-electron oxidation of 3a-(2-amino-2-carboxyethyl)-4,5-dioxo-4,5,6,7,8,9-hexahydroquinoline-7,9-dicarboxylic-acid to PQQ.</text>
</comment>
<comment type="catalytic activity">
    <reaction evidence="1">
        <text>6-(2-amino-2-carboxyethyl)-7,8-dioxo-1,2,3,4,7,8-hexahydroquinoline-2,4-dicarboxylate + 3 O2 = pyrroloquinoline quinone + 2 H2O2 + 2 H2O + H(+)</text>
        <dbReference type="Rhea" id="RHEA:10692"/>
        <dbReference type="ChEBI" id="CHEBI:15377"/>
        <dbReference type="ChEBI" id="CHEBI:15378"/>
        <dbReference type="ChEBI" id="CHEBI:15379"/>
        <dbReference type="ChEBI" id="CHEBI:16240"/>
        <dbReference type="ChEBI" id="CHEBI:58442"/>
        <dbReference type="ChEBI" id="CHEBI:58778"/>
        <dbReference type="EC" id="1.3.3.11"/>
    </reaction>
</comment>
<comment type="pathway">
    <text evidence="1">Cofactor biosynthesis; pyrroloquinoline quinone biosynthesis.</text>
</comment>
<comment type="similarity">
    <text evidence="1">Belongs to the PqqC family.</text>
</comment>
<sequence>MTALLSPDQLEADLRAIGARLYHDQHPFHALLHHGKLNRGQVQAWALNRFEYQRCIPLKDAAILARMEDPALRRIWRQRILDHDGNSPSDGGIARWLHLTDALGLPRELVESGRALLPGTRFAVQAYLHFVREKSLLEAIASSLTELFAPNIIGQRVAGMLQHYDFVSPEALAYFEHRLTEAPRDSDFALDYVKQHADTIEKQQLVKAALHFKCSVLWAQLDALHVAYVSPGVVWPDAFVPERDSKRAAA</sequence>
<evidence type="ECO:0000255" key="1">
    <source>
        <dbReference type="HAMAP-Rule" id="MF_00654"/>
    </source>
</evidence>
<keyword id="KW-0560">Oxidoreductase</keyword>
<keyword id="KW-0884">PQQ biosynthesis</keyword>
<keyword id="KW-1185">Reference proteome</keyword>
<proteinExistence type="inferred from homology"/>
<reference key="1">
    <citation type="journal article" date="2002" name="Nature">
        <title>Comparison of the genomes of two Xanthomonas pathogens with differing host specificities.</title>
        <authorList>
            <person name="da Silva A.C.R."/>
            <person name="Ferro J.A."/>
            <person name="Reinach F.C."/>
            <person name="Farah C.S."/>
            <person name="Furlan L.R."/>
            <person name="Quaggio R.B."/>
            <person name="Monteiro-Vitorello C.B."/>
            <person name="Van Sluys M.A."/>
            <person name="Almeida N.F. Jr."/>
            <person name="Alves L.M.C."/>
            <person name="do Amaral A.M."/>
            <person name="Bertolini M.C."/>
            <person name="Camargo L.E.A."/>
            <person name="Camarotte G."/>
            <person name="Cannavan F."/>
            <person name="Cardozo J."/>
            <person name="Chambergo F."/>
            <person name="Ciapina L.P."/>
            <person name="Cicarelli R.M.B."/>
            <person name="Coutinho L.L."/>
            <person name="Cursino-Santos J.R."/>
            <person name="El-Dorry H."/>
            <person name="Faria J.B."/>
            <person name="Ferreira A.J.S."/>
            <person name="Ferreira R.C.C."/>
            <person name="Ferro M.I.T."/>
            <person name="Formighieri E.F."/>
            <person name="Franco M.C."/>
            <person name="Greggio C.C."/>
            <person name="Gruber A."/>
            <person name="Katsuyama A.M."/>
            <person name="Kishi L.T."/>
            <person name="Leite R.P."/>
            <person name="Lemos E.G.M."/>
            <person name="Lemos M.V.F."/>
            <person name="Locali E.C."/>
            <person name="Machado M.A."/>
            <person name="Madeira A.M.B.N."/>
            <person name="Martinez-Rossi N.M."/>
            <person name="Martins E.C."/>
            <person name="Meidanis J."/>
            <person name="Menck C.F.M."/>
            <person name="Miyaki C.Y."/>
            <person name="Moon D.H."/>
            <person name="Moreira L.M."/>
            <person name="Novo M.T.M."/>
            <person name="Okura V.K."/>
            <person name="Oliveira M.C."/>
            <person name="Oliveira V.R."/>
            <person name="Pereira H.A."/>
            <person name="Rossi A."/>
            <person name="Sena J.A.D."/>
            <person name="Silva C."/>
            <person name="de Souza R.F."/>
            <person name="Spinola L.A.F."/>
            <person name="Takita M.A."/>
            <person name="Tamura R.E."/>
            <person name="Teixeira E.C."/>
            <person name="Tezza R.I.D."/>
            <person name="Trindade dos Santos M."/>
            <person name="Truffi D."/>
            <person name="Tsai S.M."/>
            <person name="White F.F."/>
            <person name="Setubal J.C."/>
            <person name="Kitajima J.P."/>
        </authorList>
    </citation>
    <scope>NUCLEOTIDE SEQUENCE [LARGE SCALE GENOMIC DNA]</scope>
    <source>
        <strain>ATCC 33913 / DSM 3586 / NCPPB 528 / LMG 568 / P 25</strain>
    </source>
</reference>
<name>PQQC_XANCP</name>
<protein>
    <recommendedName>
        <fullName evidence="1">Pyrroloquinoline-quinone synthase</fullName>
        <ecNumber evidence="1">1.3.3.11</ecNumber>
    </recommendedName>
    <alternativeName>
        <fullName evidence="1">Coenzyme PQQ synthesis protein C</fullName>
    </alternativeName>
    <alternativeName>
        <fullName evidence="1">Pyrroloquinoline quinone biosynthesis protein C</fullName>
    </alternativeName>
</protein>
<accession>Q8P6M9</accession>
<organism>
    <name type="scientific">Xanthomonas campestris pv. campestris (strain ATCC 33913 / DSM 3586 / NCPPB 528 / LMG 568 / P 25)</name>
    <dbReference type="NCBI Taxonomy" id="190485"/>
    <lineage>
        <taxon>Bacteria</taxon>
        <taxon>Pseudomonadati</taxon>
        <taxon>Pseudomonadota</taxon>
        <taxon>Gammaproteobacteria</taxon>
        <taxon>Lysobacterales</taxon>
        <taxon>Lysobacteraceae</taxon>
        <taxon>Xanthomonas</taxon>
    </lineage>
</organism>
<dbReference type="EC" id="1.3.3.11" evidence="1"/>
<dbReference type="EMBL" id="AE008922">
    <property type="protein sequence ID" value="AAM42210.1"/>
    <property type="molecule type" value="Genomic_DNA"/>
</dbReference>
<dbReference type="RefSeq" id="NP_638286.1">
    <property type="nucleotide sequence ID" value="NC_003902.1"/>
</dbReference>
<dbReference type="RefSeq" id="WP_011038061.1">
    <property type="nucleotide sequence ID" value="NC_003902.1"/>
</dbReference>
<dbReference type="SMR" id="Q8P6M9"/>
<dbReference type="STRING" id="190485.XCC2938"/>
<dbReference type="EnsemblBacteria" id="AAM42210">
    <property type="protein sequence ID" value="AAM42210"/>
    <property type="gene ID" value="XCC2938"/>
</dbReference>
<dbReference type="KEGG" id="xcc:XCC2938"/>
<dbReference type="PATRIC" id="fig|190485.4.peg.3142"/>
<dbReference type="eggNOG" id="COG5424">
    <property type="taxonomic scope" value="Bacteria"/>
</dbReference>
<dbReference type="HOGENOM" id="CLU_080136_0_0_6"/>
<dbReference type="OrthoDB" id="9800756at2"/>
<dbReference type="UniPathway" id="UPA00539"/>
<dbReference type="Proteomes" id="UP000001010">
    <property type="component" value="Chromosome"/>
</dbReference>
<dbReference type="GO" id="GO:0033732">
    <property type="term" value="F:pyrroloquinoline-quinone synthase activity"/>
    <property type="evidence" value="ECO:0007669"/>
    <property type="project" value="UniProtKB-EC"/>
</dbReference>
<dbReference type="GO" id="GO:0018189">
    <property type="term" value="P:pyrroloquinoline quinone biosynthetic process"/>
    <property type="evidence" value="ECO:0007669"/>
    <property type="project" value="UniProtKB-UniRule"/>
</dbReference>
<dbReference type="GO" id="GO:0006790">
    <property type="term" value="P:sulfur compound metabolic process"/>
    <property type="evidence" value="ECO:0007669"/>
    <property type="project" value="UniProtKB-ARBA"/>
</dbReference>
<dbReference type="Gene3D" id="1.20.910.10">
    <property type="entry name" value="Heme oxygenase-like"/>
    <property type="match status" value="1"/>
</dbReference>
<dbReference type="HAMAP" id="MF_00654">
    <property type="entry name" value="PQQ_syn_PqqC"/>
    <property type="match status" value="1"/>
</dbReference>
<dbReference type="InterPro" id="IPR016084">
    <property type="entry name" value="Haem_Oase-like_multi-hlx"/>
</dbReference>
<dbReference type="InterPro" id="IPR011845">
    <property type="entry name" value="PqqC"/>
</dbReference>
<dbReference type="InterPro" id="IPR039068">
    <property type="entry name" value="PqqC-like"/>
</dbReference>
<dbReference type="InterPro" id="IPR004305">
    <property type="entry name" value="Thiaminase-2/PQQC"/>
</dbReference>
<dbReference type="NCBIfam" id="TIGR02111">
    <property type="entry name" value="PQQ_syn_pqqC"/>
    <property type="match status" value="1"/>
</dbReference>
<dbReference type="PANTHER" id="PTHR40279:SF3">
    <property type="entry name" value="4-AMINOBENZOATE SYNTHASE"/>
    <property type="match status" value="1"/>
</dbReference>
<dbReference type="PANTHER" id="PTHR40279">
    <property type="entry name" value="PQQC-LIKE PROTEIN"/>
    <property type="match status" value="1"/>
</dbReference>
<dbReference type="Pfam" id="PF03070">
    <property type="entry name" value="TENA_THI-4"/>
    <property type="match status" value="1"/>
</dbReference>
<dbReference type="SUPFAM" id="SSF48613">
    <property type="entry name" value="Heme oxygenase-like"/>
    <property type="match status" value="1"/>
</dbReference>
<gene>
    <name evidence="1" type="primary">pqqC</name>
    <name type="ordered locus">XCC2938</name>
</gene>
<feature type="chain" id="PRO_0000219990" description="Pyrroloquinoline-quinone synthase">
    <location>
        <begin position="1"/>
        <end position="250"/>
    </location>
</feature>